<reference key="1">
    <citation type="journal article" date="2002" name="Nat. Biotechnol.">
        <title>Genome sequence of the dissimilatory metal ion-reducing bacterium Shewanella oneidensis.</title>
        <authorList>
            <person name="Heidelberg J.F."/>
            <person name="Paulsen I.T."/>
            <person name="Nelson K.E."/>
            <person name="Gaidos E.J."/>
            <person name="Nelson W.C."/>
            <person name="Read T.D."/>
            <person name="Eisen J.A."/>
            <person name="Seshadri R."/>
            <person name="Ward N.L."/>
            <person name="Methe B.A."/>
            <person name="Clayton R.A."/>
            <person name="Meyer T."/>
            <person name="Tsapin A."/>
            <person name="Scott J."/>
            <person name="Beanan M.J."/>
            <person name="Brinkac L.M."/>
            <person name="Daugherty S.C."/>
            <person name="DeBoy R.T."/>
            <person name="Dodson R.J."/>
            <person name="Durkin A.S."/>
            <person name="Haft D.H."/>
            <person name="Kolonay J.F."/>
            <person name="Madupu R."/>
            <person name="Peterson J.D."/>
            <person name="Umayam L.A."/>
            <person name="White O."/>
            <person name="Wolf A.M."/>
            <person name="Vamathevan J.J."/>
            <person name="Weidman J.F."/>
            <person name="Impraim M."/>
            <person name="Lee K."/>
            <person name="Berry K.J."/>
            <person name="Lee C."/>
            <person name="Mueller J."/>
            <person name="Khouri H.M."/>
            <person name="Gill J."/>
            <person name="Utterback T.R."/>
            <person name="McDonald L.A."/>
            <person name="Feldblyum T.V."/>
            <person name="Smith H.O."/>
            <person name="Venter J.C."/>
            <person name="Nealson K.H."/>
            <person name="Fraser C.M."/>
        </authorList>
    </citation>
    <scope>NUCLEOTIDE SEQUENCE [LARGE SCALE GENOMIC DNA]</scope>
    <source>
        <strain>ATCC 700550 / JCM 31522 / CIP 106686 / LMG 19005 / NCIMB 14063 / MR-1</strain>
    </source>
</reference>
<sequence length="251" mass="28065">MSEGESKSTHFGYKTVEADKKADLVAGVFHSVAAKYDIMNDVMSFGIHRFWKRYTIEVSGARPGMKVLDLAGGTGDLTAKFSHLVGDKGEVVLADINDSMLKVGRTKLRDRGIVSNVSYVQANAEALPFPDNHFDIITIAFGLRNVTDKDAALRSMNRVLKPGGKLLVLEFSKPQHEVMRKVYDLYSFKVLPKMGQLITKDADSYEYLAESIRMHPDQDTLKQMMVDAGFEQVDYTNMTDGIVALHRGYKF</sequence>
<keyword id="KW-0474">Menaquinone biosynthesis</keyword>
<keyword id="KW-0489">Methyltransferase</keyword>
<keyword id="KW-1185">Reference proteome</keyword>
<keyword id="KW-0949">S-adenosyl-L-methionine</keyword>
<keyword id="KW-0808">Transferase</keyword>
<keyword id="KW-0831">Ubiquinone biosynthesis</keyword>
<comment type="function">
    <text evidence="1">Methyltransferase required for the conversion of demethylmenaquinol (DMKH2) to menaquinol (MKH2) and the conversion of 2-polyprenyl-6-methoxy-1,4-benzoquinol (DDMQH2) to 2-polyprenyl-3-methyl-6-methoxy-1,4-benzoquinol (DMQH2).</text>
</comment>
<comment type="catalytic activity">
    <reaction evidence="1">
        <text>a 2-demethylmenaquinol + S-adenosyl-L-methionine = a menaquinol + S-adenosyl-L-homocysteine + H(+)</text>
        <dbReference type="Rhea" id="RHEA:42640"/>
        <dbReference type="Rhea" id="RHEA-COMP:9539"/>
        <dbReference type="Rhea" id="RHEA-COMP:9563"/>
        <dbReference type="ChEBI" id="CHEBI:15378"/>
        <dbReference type="ChEBI" id="CHEBI:18151"/>
        <dbReference type="ChEBI" id="CHEBI:55437"/>
        <dbReference type="ChEBI" id="CHEBI:57856"/>
        <dbReference type="ChEBI" id="CHEBI:59789"/>
        <dbReference type="EC" id="2.1.1.163"/>
    </reaction>
</comment>
<comment type="catalytic activity">
    <reaction evidence="1">
        <text>a 2-methoxy-6-(all-trans-polyprenyl)benzene-1,4-diol + S-adenosyl-L-methionine = a 5-methoxy-2-methyl-3-(all-trans-polyprenyl)benzene-1,4-diol + S-adenosyl-L-homocysteine + H(+)</text>
        <dbReference type="Rhea" id="RHEA:28286"/>
        <dbReference type="Rhea" id="RHEA-COMP:10858"/>
        <dbReference type="Rhea" id="RHEA-COMP:10859"/>
        <dbReference type="ChEBI" id="CHEBI:15378"/>
        <dbReference type="ChEBI" id="CHEBI:57856"/>
        <dbReference type="ChEBI" id="CHEBI:59789"/>
        <dbReference type="ChEBI" id="CHEBI:84166"/>
        <dbReference type="ChEBI" id="CHEBI:84167"/>
        <dbReference type="EC" id="2.1.1.201"/>
    </reaction>
</comment>
<comment type="pathway">
    <text evidence="1">Quinol/quinone metabolism; menaquinone biosynthesis; menaquinol from 1,4-dihydroxy-2-naphthoate: step 2/2.</text>
</comment>
<comment type="pathway">
    <text evidence="1">Cofactor biosynthesis; ubiquinone biosynthesis.</text>
</comment>
<comment type="similarity">
    <text evidence="1">Belongs to the class I-like SAM-binding methyltransferase superfamily. MenG/UbiE family.</text>
</comment>
<gene>
    <name evidence="1" type="primary">ubiE</name>
    <name type="ordered locus">SO_4199</name>
</gene>
<protein>
    <recommendedName>
        <fullName evidence="1">Ubiquinone/menaquinone biosynthesis C-methyltransferase UbiE</fullName>
        <ecNumber evidence="1">2.1.1.163</ecNumber>
        <ecNumber evidence="1">2.1.1.201</ecNumber>
    </recommendedName>
    <alternativeName>
        <fullName evidence="1">2-methoxy-6-polyprenyl-1,4-benzoquinol methylase</fullName>
    </alternativeName>
    <alternativeName>
        <fullName evidence="1">Demethylmenaquinone methyltransferase</fullName>
    </alternativeName>
</protein>
<organism>
    <name type="scientific">Shewanella oneidensis (strain ATCC 700550 / JCM 31522 / CIP 106686 / LMG 19005 / NCIMB 14063 / MR-1)</name>
    <dbReference type="NCBI Taxonomy" id="211586"/>
    <lineage>
        <taxon>Bacteria</taxon>
        <taxon>Pseudomonadati</taxon>
        <taxon>Pseudomonadota</taxon>
        <taxon>Gammaproteobacteria</taxon>
        <taxon>Alteromonadales</taxon>
        <taxon>Shewanellaceae</taxon>
        <taxon>Shewanella</taxon>
    </lineage>
</organism>
<feature type="chain" id="PRO_0000193325" description="Ubiquinone/menaquinone biosynthesis C-methyltransferase UbiE">
    <location>
        <begin position="1"/>
        <end position="251"/>
    </location>
</feature>
<feature type="binding site" evidence="1">
    <location>
        <position position="74"/>
    </location>
    <ligand>
        <name>S-adenosyl-L-methionine</name>
        <dbReference type="ChEBI" id="CHEBI:59789"/>
    </ligand>
</feature>
<feature type="binding site" evidence="1">
    <location>
        <position position="95"/>
    </location>
    <ligand>
        <name>S-adenosyl-L-methionine</name>
        <dbReference type="ChEBI" id="CHEBI:59789"/>
    </ligand>
</feature>
<feature type="binding site" evidence="1">
    <location>
        <begin position="123"/>
        <end position="124"/>
    </location>
    <ligand>
        <name>S-adenosyl-L-methionine</name>
        <dbReference type="ChEBI" id="CHEBI:59789"/>
    </ligand>
</feature>
<evidence type="ECO:0000255" key="1">
    <source>
        <dbReference type="HAMAP-Rule" id="MF_01813"/>
    </source>
</evidence>
<name>UBIE_SHEON</name>
<proteinExistence type="inferred from homology"/>
<accession>Q8E9R7</accession>
<dbReference type="EC" id="2.1.1.163" evidence="1"/>
<dbReference type="EC" id="2.1.1.201" evidence="1"/>
<dbReference type="EMBL" id="AE014299">
    <property type="protein sequence ID" value="AAN57171.1"/>
    <property type="molecule type" value="Genomic_DNA"/>
</dbReference>
<dbReference type="RefSeq" id="NP_719727.1">
    <property type="nucleotide sequence ID" value="NC_004347.2"/>
</dbReference>
<dbReference type="RefSeq" id="WP_011073882.1">
    <property type="nucleotide sequence ID" value="NC_004347.2"/>
</dbReference>
<dbReference type="SMR" id="Q8E9R7"/>
<dbReference type="STRING" id="211586.SO_4199"/>
<dbReference type="PaxDb" id="211586-SO_4199"/>
<dbReference type="KEGG" id="son:SO_4199"/>
<dbReference type="PATRIC" id="fig|211586.12.peg.4055"/>
<dbReference type="eggNOG" id="COG2226">
    <property type="taxonomic scope" value="Bacteria"/>
</dbReference>
<dbReference type="HOGENOM" id="CLU_037990_0_0_6"/>
<dbReference type="OrthoDB" id="9808140at2"/>
<dbReference type="PhylomeDB" id="Q8E9R7"/>
<dbReference type="BioCyc" id="SONE211586:G1GMP-3872-MONOMER"/>
<dbReference type="UniPathway" id="UPA00079">
    <property type="reaction ID" value="UER00169"/>
</dbReference>
<dbReference type="UniPathway" id="UPA00232"/>
<dbReference type="Proteomes" id="UP000008186">
    <property type="component" value="Chromosome"/>
</dbReference>
<dbReference type="GO" id="GO:0008425">
    <property type="term" value="F:2-methoxy-6-polyprenyl-1,4-benzoquinol methyltransferase activity"/>
    <property type="evidence" value="ECO:0000318"/>
    <property type="project" value="GO_Central"/>
</dbReference>
<dbReference type="GO" id="GO:0043770">
    <property type="term" value="F:demethylmenaquinone methyltransferase activity"/>
    <property type="evidence" value="ECO:0007669"/>
    <property type="project" value="UniProtKB-UniRule"/>
</dbReference>
<dbReference type="GO" id="GO:0009060">
    <property type="term" value="P:aerobic respiration"/>
    <property type="evidence" value="ECO:0007669"/>
    <property type="project" value="UniProtKB-UniRule"/>
</dbReference>
<dbReference type="GO" id="GO:0009234">
    <property type="term" value="P:menaquinone biosynthetic process"/>
    <property type="evidence" value="ECO:0007669"/>
    <property type="project" value="UniProtKB-UniRule"/>
</dbReference>
<dbReference type="GO" id="GO:0032259">
    <property type="term" value="P:methylation"/>
    <property type="evidence" value="ECO:0007669"/>
    <property type="project" value="UniProtKB-KW"/>
</dbReference>
<dbReference type="GO" id="GO:0006744">
    <property type="term" value="P:ubiquinone biosynthetic process"/>
    <property type="evidence" value="ECO:0000318"/>
    <property type="project" value="GO_Central"/>
</dbReference>
<dbReference type="CDD" id="cd02440">
    <property type="entry name" value="AdoMet_MTases"/>
    <property type="match status" value="1"/>
</dbReference>
<dbReference type="FunFam" id="3.40.50.150:FF:000014">
    <property type="entry name" value="Ubiquinone/menaquinone biosynthesis C-methyltransferase UbiE"/>
    <property type="match status" value="1"/>
</dbReference>
<dbReference type="Gene3D" id="3.40.50.150">
    <property type="entry name" value="Vaccinia Virus protein VP39"/>
    <property type="match status" value="1"/>
</dbReference>
<dbReference type="HAMAP" id="MF_01813">
    <property type="entry name" value="MenG_UbiE_methyltr"/>
    <property type="match status" value="1"/>
</dbReference>
<dbReference type="InterPro" id="IPR029063">
    <property type="entry name" value="SAM-dependent_MTases_sf"/>
</dbReference>
<dbReference type="InterPro" id="IPR004033">
    <property type="entry name" value="UbiE/COQ5_MeTrFase"/>
</dbReference>
<dbReference type="InterPro" id="IPR023576">
    <property type="entry name" value="UbiE/COQ5_MeTrFase_CS"/>
</dbReference>
<dbReference type="NCBIfam" id="TIGR01934">
    <property type="entry name" value="MenG_MenH_UbiE"/>
    <property type="match status" value="1"/>
</dbReference>
<dbReference type="NCBIfam" id="NF001240">
    <property type="entry name" value="PRK00216.1-1"/>
    <property type="match status" value="1"/>
</dbReference>
<dbReference type="NCBIfam" id="NF001242">
    <property type="entry name" value="PRK00216.1-3"/>
    <property type="match status" value="1"/>
</dbReference>
<dbReference type="NCBIfam" id="NF001244">
    <property type="entry name" value="PRK00216.1-5"/>
    <property type="match status" value="1"/>
</dbReference>
<dbReference type="PANTHER" id="PTHR43591:SF24">
    <property type="entry name" value="2-METHOXY-6-POLYPRENYL-1,4-BENZOQUINOL METHYLASE, MITOCHONDRIAL"/>
    <property type="match status" value="1"/>
</dbReference>
<dbReference type="PANTHER" id="PTHR43591">
    <property type="entry name" value="METHYLTRANSFERASE"/>
    <property type="match status" value="1"/>
</dbReference>
<dbReference type="Pfam" id="PF01209">
    <property type="entry name" value="Ubie_methyltran"/>
    <property type="match status" value="1"/>
</dbReference>
<dbReference type="SUPFAM" id="SSF53335">
    <property type="entry name" value="S-adenosyl-L-methionine-dependent methyltransferases"/>
    <property type="match status" value="1"/>
</dbReference>
<dbReference type="PROSITE" id="PS51608">
    <property type="entry name" value="SAM_MT_UBIE"/>
    <property type="match status" value="1"/>
</dbReference>
<dbReference type="PROSITE" id="PS01183">
    <property type="entry name" value="UBIE_1"/>
    <property type="match status" value="1"/>
</dbReference>
<dbReference type="PROSITE" id="PS01184">
    <property type="entry name" value="UBIE_2"/>
    <property type="match status" value="1"/>
</dbReference>